<protein>
    <recommendedName>
        <fullName evidence="1">Beta-hexosaminidase</fullName>
        <ecNumber evidence="1">3.2.1.52</ecNumber>
    </recommendedName>
    <alternativeName>
        <fullName evidence="1">Beta-N-acetylhexosaminidase</fullName>
    </alternativeName>
    <alternativeName>
        <fullName evidence="1">N-acetyl-beta-glucosaminidase</fullName>
    </alternativeName>
</protein>
<proteinExistence type="inferred from homology"/>
<comment type="function">
    <text evidence="1">Plays a role in peptidoglycan recycling by cleaving the terminal beta-1,4-linked N-acetylglucosamine (GlcNAc) from peptide-linked peptidoglycan fragments, giving rise to free GlcNAc, anhydro-N-acetylmuramic acid and anhydro-N-acetylmuramic acid-linked peptides.</text>
</comment>
<comment type="catalytic activity">
    <reaction evidence="1">
        <text>Hydrolysis of terminal non-reducing N-acetyl-D-hexosamine residues in N-acetyl-beta-D-hexosaminides.</text>
        <dbReference type="EC" id="3.2.1.52"/>
    </reaction>
</comment>
<comment type="pathway">
    <text evidence="1">Cell wall biogenesis; peptidoglycan recycling.</text>
</comment>
<comment type="subcellular location">
    <subcellularLocation>
        <location evidence="1">Cytoplasm</location>
    </subcellularLocation>
</comment>
<comment type="similarity">
    <text evidence="1">Belongs to the glycosyl hydrolase 3 family. NagZ subfamily.</text>
</comment>
<gene>
    <name evidence="1" type="primary">nagZ</name>
    <name type="ordered locus">PMI0873</name>
</gene>
<keyword id="KW-0131">Cell cycle</keyword>
<keyword id="KW-0132">Cell division</keyword>
<keyword id="KW-0133">Cell shape</keyword>
<keyword id="KW-0961">Cell wall biogenesis/degradation</keyword>
<keyword id="KW-0963">Cytoplasm</keyword>
<keyword id="KW-0326">Glycosidase</keyword>
<keyword id="KW-0378">Hydrolase</keyword>
<keyword id="KW-0573">Peptidoglycan synthesis</keyword>
<keyword id="KW-1185">Reference proteome</keyword>
<feature type="chain" id="PRO_1000121065" description="Beta-hexosaminidase">
    <location>
        <begin position="1"/>
        <end position="339"/>
    </location>
</feature>
<feature type="region of interest" description="Disordered" evidence="2">
    <location>
        <begin position="164"/>
        <end position="185"/>
    </location>
</feature>
<feature type="compositionally biased region" description="Basic and acidic residues" evidence="2">
    <location>
        <begin position="171"/>
        <end position="185"/>
    </location>
</feature>
<feature type="active site" description="Proton donor/acceptor" evidence="1">
    <location>
        <position position="176"/>
    </location>
</feature>
<feature type="active site" description="Nucleophile" evidence="1">
    <location>
        <position position="248"/>
    </location>
</feature>
<feature type="binding site" evidence="1">
    <location>
        <position position="62"/>
    </location>
    <ligand>
        <name>substrate</name>
    </ligand>
</feature>
<feature type="binding site" evidence="1">
    <location>
        <position position="70"/>
    </location>
    <ligand>
        <name>substrate</name>
    </ligand>
</feature>
<feature type="binding site" evidence="1">
    <location>
        <position position="133"/>
    </location>
    <ligand>
        <name>substrate</name>
    </ligand>
</feature>
<feature type="binding site" evidence="1">
    <location>
        <begin position="163"/>
        <end position="164"/>
    </location>
    <ligand>
        <name>substrate</name>
    </ligand>
</feature>
<feature type="site" description="Important for catalytic activity" evidence="1">
    <location>
        <position position="174"/>
    </location>
</feature>
<organism>
    <name type="scientific">Proteus mirabilis (strain HI4320)</name>
    <dbReference type="NCBI Taxonomy" id="529507"/>
    <lineage>
        <taxon>Bacteria</taxon>
        <taxon>Pseudomonadati</taxon>
        <taxon>Pseudomonadota</taxon>
        <taxon>Gammaproteobacteria</taxon>
        <taxon>Enterobacterales</taxon>
        <taxon>Morganellaceae</taxon>
        <taxon>Proteus</taxon>
    </lineage>
</organism>
<dbReference type="EC" id="3.2.1.52" evidence="1"/>
<dbReference type="EMBL" id="AM942759">
    <property type="protein sequence ID" value="CAR41971.1"/>
    <property type="molecule type" value="Genomic_DNA"/>
</dbReference>
<dbReference type="RefSeq" id="WP_004247099.1">
    <property type="nucleotide sequence ID" value="NC_010554.1"/>
</dbReference>
<dbReference type="SMR" id="B4EVE7"/>
<dbReference type="CAZy" id="GH3">
    <property type="family name" value="Glycoside Hydrolase Family 3"/>
</dbReference>
<dbReference type="EnsemblBacteria" id="CAR41971">
    <property type="protein sequence ID" value="CAR41971"/>
    <property type="gene ID" value="PMI0873"/>
</dbReference>
<dbReference type="GeneID" id="6800113"/>
<dbReference type="KEGG" id="pmr:PMI0873"/>
<dbReference type="eggNOG" id="COG1472">
    <property type="taxonomic scope" value="Bacteria"/>
</dbReference>
<dbReference type="HOGENOM" id="CLU_008392_0_0_6"/>
<dbReference type="UniPathway" id="UPA00544"/>
<dbReference type="Proteomes" id="UP000008319">
    <property type="component" value="Chromosome"/>
</dbReference>
<dbReference type="GO" id="GO:0005737">
    <property type="term" value="C:cytoplasm"/>
    <property type="evidence" value="ECO:0007669"/>
    <property type="project" value="UniProtKB-SubCell"/>
</dbReference>
<dbReference type="GO" id="GO:0004563">
    <property type="term" value="F:beta-N-acetylhexosaminidase activity"/>
    <property type="evidence" value="ECO:0007669"/>
    <property type="project" value="UniProtKB-UniRule"/>
</dbReference>
<dbReference type="GO" id="GO:0005975">
    <property type="term" value="P:carbohydrate metabolic process"/>
    <property type="evidence" value="ECO:0007669"/>
    <property type="project" value="InterPro"/>
</dbReference>
<dbReference type="GO" id="GO:0051301">
    <property type="term" value="P:cell division"/>
    <property type="evidence" value="ECO:0007669"/>
    <property type="project" value="UniProtKB-KW"/>
</dbReference>
<dbReference type="GO" id="GO:0071555">
    <property type="term" value="P:cell wall organization"/>
    <property type="evidence" value="ECO:0007669"/>
    <property type="project" value="UniProtKB-KW"/>
</dbReference>
<dbReference type="GO" id="GO:0009252">
    <property type="term" value="P:peptidoglycan biosynthetic process"/>
    <property type="evidence" value="ECO:0007669"/>
    <property type="project" value="UniProtKB-KW"/>
</dbReference>
<dbReference type="GO" id="GO:0009254">
    <property type="term" value="P:peptidoglycan turnover"/>
    <property type="evidence" value="ECO:0007669"/>
    <property type="project" value="UniProtKB-UniRule"/>
</dbReference>
<dbReference type="GO" id="GO:0008360">
    <property type="term" value="P:regulation of cell shape"/>
    <property type="evidence" value="ECO:0007669"/>
    <property type="project" value="UniProtKB-KW"/>
</dbReference>
<dbReference type="FunFam" id="3.20.20.300:FF:000001">
    <property type="entry name" value="Beta-hexosaminidase"/>
    <property type="match status" value="1"/>
</dbReference>
<dbReference type="Gene3D" id="3.20.20.300">
    <property type="entry name" value="Glycoside hydrolase, family 3, N-terminal domain"/>
    <property type="match status" value="1"/>
</dbReference>
<dbReference type="HAMAP" id="MF_00364">
    <property type="entry name" value="NagZ"/>
    <property type="match status" value="1"/>
</dbReference>
<dbReference type="InterPro" id="IPR022956">
    <property type="entry name" value="Beta_hexosaminidase_bac"/>
</dbReference>
<dbReference type="InterPro" id="IPR019800">
    <property type="entry name" value="Glyco_hydro_3_AS"/>
</dbReference>
<dbReference type="InterPro" id="IPR001764">
    <property type="entry name" value="Glyco_hydro_3_N"/>
</dbReference>
<dbReference type="InterPro" id="IPR036962">
    <property type="entry name" value="Glyco_hydro_3_N_sf"/>
</dbReference>
<dbReference type="InterPro" id="IPR017853">
    <property type="entry name" value="Glycoside_hydrolase_SF"/>
</dbReference>
<dbReference type="InterPro" id="IPR050226">
    <property type="entry name" value="NagZ_Beta-hexosaminidase"/>
</dbReference>
<dbReference type="NCBIfam" id="NF003740">
    <property type="entry name" value="PRK05337.1"/>
    <property type="match status" value="1"/>
</dbReference>
<dbReference type="PANTHER" id="PTHR30480:SF13">
    <property type="entry name" value="BETA-HEXOSAMINIDASE"/>
    <property type="match status" value="1"/>
</dbReference>
<dbReference type="PANTHER" id="PTHR30480">
    <property type="entry name" value="BETA-HEXOSAMINIDASE-RELATED"/>
    <property type="match status" value="1"/>
</dbReference>
<dbReference type="Pfam" id="PF00933">
    <property type="entry name" value="Glyco_hydro_3"/>
    <property type="match status" value="1"/>
</dbReference>
<dbReference type="SUPFAM" id="SSF51445">
    <property type="entry name" value="(Trans)glycosidases"/>
    <property type="match status" value="1"/>
</dbReference>
<dbReference type="PROSITE" id="PS00775">
    <property type="entry name" value="GLYCOSYL_HYDROL_F3"/>
    <property type="match status" value="1"/>
</dbReference>
<accession>B4EVE7</accession>
<name>NAGZ_PROMH</name>
<sequence>MGPVMLDVEGYELDNEEREILKHPLVGGLILFTRNFHDAEQLNELVRQIRDASHERLVIAVDQEGGRVQRFRDGFTRLPAAQSYAALNERYQASRLAQEAGWLMASEMIAMDIDISFAPVLDLGHDCIAIGERSFHECPEIAMDMAESFIKGMRSAGMKSTGKHFPGHGAVRADSHKETPRDERSLNDIRQRDMAIFKDFIQRQLLDAIMPAHVIYSQIDERPASGSPYWLKSILREQLGFQGVIFSDDLSMEGAAIMGSYAQRAQRSLDAGCDMLLVCNNRKGAVSVLDNLSFVKAERISALYHHRGRYTLSELQASDRWKKANQMLTQLQEQWQERA</sequence>
<evidence type="ECO:0000255" key="1">
    <source>
        <dbReference type="HAMAP-Rule" id="MF_00364"/>
    </source>
</evidence>
<evidence type="ECO:0000256" key="2">
    <source>
        <dbReference type="SAM" id="MobiDB-lite"/>
    </source>
</evidence>
<reference key="1">
    <citation type="journal article" date="2008" name="J. Bacteriol.">
        <title>Complete genome sequence of uropathogenic Proteus mirabilis, a master of both adherence and motility.</title>
        <authorList>
            <person name="Pearson M.M."/>
            <person name="Sebaihia M."/>
            <person name="Churcher C."/>
            <person name="Quail M.A."/>
            <person name="Seshasayee A.S."/>
            <person name="Luscombe N.M."/>
            <person name="Abdellah Z."/>
            <person name="Arrosmith C."/>
            <person name="Atkin B."/>
            <person name="Chillingworth T."/>
            <person name="Hauser H."/>
            <person name="Jagels K."/>
            <person name="Moule S."/>
            <person name="Mungall K."/>
            <person name="Norbertczak H."/>
            <person name="Rabbinowitsch E."/>
            <person name="Walker D."/>
            <person name="Whithead S."/>
            <person name="Thomson N.R."/>
            <person name="Rather P.N."/>
            <person name="Parkhill J."/>
            <person name="Mobley H.L.T."/>
        </authorList>
    </citation>
    <scope>NUCLEOTIDE SEQUENCE [LARGE SCALE GENOMIC DNA]</scope>
    <source>
        <strain>HI4320</strain>
    </source>
</reference>